<protein>
    <recommendedName>
        <fullName>C-C chemokine receptor type 1</fullName>
        <shortName>C-C CKR-1</shortName>
        <shortName>CC-CKR-1</shortName>
        <shortName>CCR-1</shortName>
        <shortName>CCR1</shortName>
    </recommendedName>
    <alternativeName>
        <fullName>HM145</fullName>
    </alternativeName>
    <alternativeName>
        <fullName>LD78 receptor</fullName>
    </alternativeName>
    <alternativeName>
        <fullName>Macrophage inflammatory protein 1-alpha receptor</fullName>
        <shortName>MIP-1alpha-R</shortName>
    </alternativeName>
    <alternativeName>
        <fullName>RANTES-R</fullName>
    </alternativeName>
    <cdAntigenName>CD191</cdAntigenName>
</protein>
<dbReference type="EMBL" id="L09230">
    <property type="protein sequence ID" value="AAA58408.1"/>
    <property type="molecule type" value="mRNA"/>
</dbReference>
<dbReference type="EMBL" id="L10918">
    <property type="protein sequence ID" value="AAA36543.1"/>
    <property type="molecule type" value="mRNA"/>
</dbReference>
<dbReference type="EMBL" id="D10925">
    <property type="protein sequence ID" value="BAA01723.1"/>
    <property type="molecule type" value="mRNA"/>
</dbReference>
<dbReference type="EMBL" id="BC051306">
    <property type="protein sequence ID" value="AAH51306.2"/>
    <property type="molecule type" value="mRNA"/>
</dbReference>
<dbReference type="EMBL" id="BC064991">
    <property type="protein sequence ID" value="AAH64991.1"/>
    <property type="molecule type" value="mRNA"/>
</dbReference>
<dbReference type="CCDS" id="CCDS2737.1"/>
<dbReference type="PIR" id="A45177">
    <property type="entry name" value="A45177"/>
</dbReference>
<dbReference type="RefSeq" id="NP_001286.1">
    <property type="nucleotide sequence ID" value="NM_001295.3"/>
</dbReference>
<dbReference type="PDB" id="7VL8">
    <property type="method" value="EM"/>
    <property type="resolution" value="2.90 A"/>
    <property type="chains" value="R=1-355"/>
</dbReference>
<dbReference type="PDB" id="7VL9">
    <property type="method" value="EM"/>
    <property type="resolution" value="2.60 A"/>
    <property type="chains" value="R=1-355"/>
</dbReference>
<dbReference type="PDB" id="7VLA">
    <property type="method" value="EM"/>
    <property type="resolution" value="2.70 A"/>
    <property type="chains" value="R=1-355"/>
</dbReference>
<dbReference type="PDBsum" id="7VL8"/>
<dbReference type="PDBsum" id="7VL9"/>
<dbReference type="PDBsum" id="7VLA"/>
<dbReference type="EMDB" id="EMD-32020"/>
<dbReference type="EMDB" id="EMD-32021"/>
<dbReference type="EMDB" id="EMD-32022"/>
<dbReference type="SMR" id="P32246"/>
<dbReference type="BioGRID" id="107635">
    <property type="interactions" value="377"/>
</dbReference>
<dbReference type="DIP" id="DIP-5832N"/>
<dbReference type="FunCoup" id="P32246">
    <property type="interactions" value="942"/>
</dbReference>
<dbReference type="IntAct" id="P32246">
    <property type="interactions" value="340"/>
</dbReference>
<dbReference type="MINT" id="P32246"/>
<dbReference type="STRING" id="9606.ENSP00000296140"/>
<dbReference type="BindingDB" id="P32246"/>
<dbReference type="ChEMBL" id="CHEMBL2413"/>
<dbReference type="DrugBank" id="DB14941">
    <property type="generic name" value="BMS-817399"/>
</dbReference>
<dbReference type="DrugBank" id="DB12963">
    <property type="generic name" value="CCX-354"/>
</dbReference>
<dbReference type="DrugBank" id="DB06505">
    <property type="generic name" value="MLN3897"/>
</dbReference>
<dbReference type="DrugCentral" id="P32246"/>
<dbReference type="GuidetoPHARMACOLOGY" id="58"/>
<dbReference type="GlyCosmos" id="P32246">
    <property type="glycosylation" value="1 site, No reported glycans"/>
</dbReference>
<dbReference type="GlyGen" id="P32246">
    <property type="glycosylation" value="1 site"/>
</dbReference>
<dbReference type="iPTMnet" id="P32246"/>
<dbReference type="PhosphoSitePlus" id="P32246"/>
<dbReference type="BioMuta" id="CCR1"/>
<dbReference type="DMDM" id="416802"/>
<dbReference type="MassIVE" id="P32246"/>
<dbReference type="PaxDb" id="9606-ENSP00000296140"/>
<dbReference type="PeptideAtlas" id="P32246"/>
<dbReference type="ProteomicsDB" id="54854"/>
<dbReference type="Antibodypedia" id="12727">
    <property type="antibodies" value="591 antibodies from 37 providers"/>
</dbReference>
<dbReference type="DNASU" id="1230"/>
<dbReference type="Ensembl" id="ENST00000296140.4">
    <property type="protein sequence ID" value="ENSP00000296140.3"/>
    <property type="gene ID" value="ENSG00000163823.4"/>
</dbReference>
<dbReference type="GeneID" id="1230"/>
<dbReference type="KEGG" id="hsa:1230"/>
<dbReference type="MANE-Select" id="ENST00000296140.4">
    <property type="protein sequence ID" value="ENSP00000296140.3"/>
    <property type="RefSeq nucleotide sequence ID" value="NM_001295.3"/>
    <property type="RefSeq protein sequence ID" value="NP_001286.1"/>
</dbReference>
<dbReference type="AGR" id="HGNC:1602"/>
<dbReference type="CTD" id="1230"/>
<dbReference type="DisGeNET" id="1230"/>
<dbReference type="GeneCards" id="CCR1"/>
<dbReference type="HGNC" id="HGNC:1602">
    <property type="gene designation" value="CCR1"/>
</dbReference>
<dbReference type="HPA" id="ENSG00000163823">
    <property type="expression patterns" value="Tissue enhanced (lymphoid)"/>
</dbReference>
<dbReference type="MalaCards" id="CCR1"/>
<dbReference type="MIM" id="601159">
    <property type="type" value="gene"/>
</dbReference>
<dbReference type="neXtProt" id="NX_P32246"/>
<dbReference type="OpenTargets" id="ENSG00000163823"/>
<dbReference type="Orphanet" id="117">
    <property type="disease" value="Behcet disease"/>
</dbReference>
<dbReference type="PharmGKB" id="PA26166"/>
<dbReference type="VEuPathDB" id="HostDB:ENSG00000163823"/>
<dbReference type="eggNOG" id="KOG3656">
    <property type="taxonomic scope" value="Eukaryota"/>
</dbReference>
<dbReference type="GeneTree" id="ENSGT01020000230359"/>
<dbReference type="HOGENOM" id="CLU_009579_8_3_1"/>
<dbReference type="InParanoid" id="P32246"/>
<dbReference type="OMA" id="GITPCQK"/>
<dbReference type="OrthoDB" id="5970631at2759"/>
<dbReference type="PAN-GO" id="P32246">
    <property type="GO annotations" value="10 GO annotations based on evolutionary models"/>
</dbReference>
<dbReference type="PhylomeDB" id="P32246"/>
<dbReference type="TreeFam" id="TF330966"/>
<dbReference type="PathwayCommons" id="P32246"/>
<dbReference type="Reactome" id="R-HSA-380108">
    <property type="pathway name" value="Chemokine receptors bind chemokines"/>
</dbReference>
<dbReference type="Reactome" id="R-HSA-418594">
    <property type="pathway name" value="G alpha (i) signalling events"/>
</dbReference>
<dbReference type="Reactome" id="R-HSA-6783783">
    <property type="pathway name" value="Interleukin-10 signaling"/>
</dbReference>
<dbReference type="SignaLink" id="P32246"/>
<dbReference type="SIGNOR" id="P32246"/>
<dbReference type="BioGRID-ORCS" id="1230">
    <property type="hits" value="11 hits in 1156 CRISPR screens"/>
</dbReference>
<dbReference type="ChiTaRS" id="CCR1">
    <property type="organism name" value="human"/>
</dbReference>
<dbReference type="GeneWiki" id="CCR1"/>
<dbReference type="GenomeRNAi" id="1230"/>
<dbReference type="Pharos" id="P32246">
    <property type="development level" value="Tchem"/>
</dbReference>
<dbReference type="PRO" id="PR:P32246"/>
<dbReference type="Proteomes" id="UP000005640">
    <property type="component" value="Chromosome 3"/>
</dbReference>
<dbReference type="RNAct" id="P32246">
    <property type="molecule type" value="protein"/>
</dbReference>
<dbReference type="Bgee" id="ENSG00000163823">
    <property type="expression patterns" value="Expressed in monocyte and 168 other cell types or tissues"/>
</dbReference>
<dbReference type="ExpressionAtlas" id="P32246">
    <property type="expression patterns" value="baseline and differential"/>
</dbReference>
<dbReference type="GO" id="GO:0005737">
    <property type="term" value="C:cytoplasm"/>
    <property type="evidence" value="ECO:0000318"/>
    <property type="project" value="GO_Central"/>
</dbReference>
<dbReference type="GO" id="GO:0009897">
    <property type="term" value="C:external side of plasma membrane"/>
    <property type="evidence" value="ECO:0000314"/>
    <property type="project" value="UniProtKB"/>
</dbReference>
<dbReference type="GO" id="GO:0005886">
    <property type="term" value="C:plasma membrane"/>
    <property type="evidence" value="ECO:0000314"/>
    <property type="project" value="UniProtKB"/>
</dbReference>
<dbReference type="GO" id="GO:0019957">
    <property type="term" value="F:C-C chemokine binding"/>
    <property type="evidence" value="ECO:0000353"/>
    <property type="project" value="UniProtKB"/>
</dbReference>
<dbReference type="GO" id="GO:0016493">
    <property type="term" value="F:C-C chemokine receptor activity"/>
    <property type="evidence" value="ECO:0000314"/>
    <property type="project" value="UniProtKB"/>
</dbReference>
<dbReference type="GO" id="GO:0071791">
    <property type="term" value="F:chemokine (C-C motif) ligand 5 binding"/>
    <property type="evidence" value="ECO:0000353"/>
    <property type="project" value="UniProtKB"/>
</dbReference>
<dbReference type="GO" id="GO:0035717">
    <property type="term" value="F:chemokine (C-C motif) ligand 7 binding"/>
    <property type="evidence" value="ECO:0000353"/>
    <property type="project" value="UniProtKB"/>
</dbReference>
<dbReference type="GO" id="GO:0004950">
    <property type="term" value="F:chemokine receptor activity"/>
    <property type="evidence" value="ECO:0000314"/>
    <property type="project" value="UniProtKB"/>
</dbReference>
<dbReference type="GO" id="GO:0004435">
    <property type="term" value="F:phosphatidylinositol-4,5-bisphosphate phospholipase C activity"/>
    <property type="evidence" value="ECO:0000314"/>
    <property type="project" value="UniProtKB"/>
</dbReference>
<dbReference type="GO" id="GO:0006816">
    <property type="term" value="P:calcium ion transport"/>
    <property type="evidence" value="ECO:0000314"/>
    <property type="project" value="UniProtKB"/>
</dbReference>
<dbReference type="GO" id="GO:0019722">
    <property type="term" value="P:calcium-mediated signaling"/>
    <property type="evidence" value="ECO:0000318"/>
    <property type="project" value="GO_Central"/>
</dbReference>
<dbReference type="GO" id="GO:0007155">
    <property type="term" value="P:cell adhesion"/>
    <property type="evidence" value="ECO:0000304"/>
    <property type="project" value="ProtInc"/>
</dbReference>
<dbReference type="GO" id="GO:0060326">
    <property type="term" value="P:cell chemotaxis"/>
    <property type="evidence" value="ECO:0000318"/>
    <property type="project" value="GO_Central"/>
</dbReference>
<dbReference type="GO" id="GO:0007166">
    <property type="term" value="P:cell surface receptor signaling pathway"/>
    <property type="evidence" value="ECO:0000304"/>
    <property type="project" value="ProtInc"/>
</dbReference>
<dbReference type="GO" id="GO:0007267">
    <property type="term" value="P:cell-cell signaling"/>
    <property type="evidence" value="ECO:0000314"/>
    <property type="project" value="UniProtKB"/>
</dbReference>
<dbReference type="GO" id="GO:0070098">
    <property type="term" value="P:chemokine-mediated signaling pathway"/>
    <property type="evidence" value="ECO:0000314"/>
    <property type="project" value="UniProtKB"/>
</dbReference>
<dbReference type="GO" id="GO:0006935">
    <property type="term" value="P:chemotaxis"/>
    <property type="evidence" value="ECO:0000303"/>
    <property type="project" value="UniProtKB"/>
</dbReference>
<dbReference type="GO" id="GO:0019221">
    <property type="term" value="P:cytokine-mediated signaling pathway"/>
    <property type="evidence" value="ECO:0000303"/>
    <property type="project" value="UniProtKB"/>
</dbReference>
<dbReference type="GO" id="GO:0002407">
    <property type="term" value="P:dendritic cell chemotaxis"/>
    <property type="evidence" value="ECO:0000304"/>
    <property type="project" value="BHF-UCL"/>
</dbReference>
<dbReference type="GO" id="GO:0006887">
    <property type="term" value="P:exocytosis"/>
    <property type="evidence" value="ECO:0000314"/>
    <property type="project" value="UniProtKB"/>
</dbReference>
<dbReference type="GO" id="GO:0007187">
    <property type="term" value="P:G protein-coupled receptor signaling pathway, coupled to cyclic nucleotide second messenger"/>
    <property type="evidence" value="ECO:0000304"/>
    <property type="project" value="ProtInc"/>
</dbReference>
<dbReference type="GO" id="GO:0006955">
    <property type="term" value="P:immune response"/>
    <property type="evidence" value="ECO:0000314"/>
    <property type="project" value="UniProtKB"/>
</dbReference>
<dbReference type="GO" id="GO:0006954">
    <property type="term" value="P:inflammatory response"/>
    <property type="evidence" value="ECO:0000318"/>
    <property type="project" value="GO_Central"/>
</dbReference>
<dbReference type="GO" id="GO:0006874">
    <property type="term" value="P:intracellular calcium ion homeostasis"/>
    <property type="evidence" value="ECO:0000314"/>
    <property type="project" value="UniProtKB"/>
</dbReference>
<dbReference type="GO" id="GO:0002548">
    <property type="term" value="P:monocyte chemotaxis"/>
    <property type="evidence" value="ECO:0000314"/>
    <property type="project" value="UniProt"/>
</dbReference>
<dbReference type="GO" id="GO:0030502">
    <property type="term" value="P:negative regulation of bone mineralization"/>
    <property type="evidence" value="ECO:0000315"/>
    <property type="project" value="UniProtKB"/>
</dbReference>
<dbReference type="GO" id="GO:0010629">
    <property type="term" value="P:negative regulation of gene expression"/>
    <property type="evidence" value="ECO:0000315"/>
    <property type="project" value="UniProtKB"/>
</dbReference>
<dbReference type="GO" id="GO:0051928">
    <property type="term" value="P:positive regulation of calcium ion transport"/>
    <property type="evidence" value="ECO:0000314"/>
    <property type="project" value="UniProtKB"/>
</dbReference>
<dbReference type="GO" id="GO:0030335">
    <property type="term" value="P:positive regulation of cell migration"/>
    <property type="evidence" value="ECO:0000315"/>
    <property type="project" value="CACAO"/>
</dbReference>
<dbReference type="GO" id="GO:0007204">
    <property type="term" value="P:positive regulation of cytosolic calcium ion concentration"/>
    <property type="evidence" value="ECO:0000314"/>
    <property type="project" value="UniProtKB"/>
</dbReference>
<dbReference type="GO" id="GO:0070374">
    <property type="term" value="P:positive regulation of ERK1 and ERK2 cascade"/>
    <property type="evidence" value="ECO:0000315"/>
    <property type="project" value="UniProtKB"/>
</dbReference>
<dbReference type="GO" id="GO:0090026">
    <property type="term" value="P:positive regulation of monocyte chemotaxis"/>
    <property type="evidence" value="ECO:0000314"/>
    <property type="project" value="UniProtKB"/>
</dbReference>
<dbReference type="GO" id="GO:0045672">
    <property type="term" value="P:positive regulation of osteoclast differentiation"/>
    <property type="evidence" value="ECO:0000315"/>
    <property type="project" value="UniProtKB"/>
</dbReference>
<dbReference type="GO" id="GO:0009611">
    <property type="term" value="P:response to wounding"/>
    <property type="evidence" value="ECO:0000304"/>
    <property type="project" value="ProtInc"/>
</dbReference>
<dbReference type="CDD" id="cd15183">
    <property type="entry name" value="7tmA_CCR1"/>
    <property type="match status" value="1"/>
</dbReference>
<dbReference type="FunFam" id="1.20.1070.10:FF:000026">
    <property type="entry name" value="C-C chemokine receptor type 5"/>
    <property type="match status" value="1"/>
</dbReference>
<dbReference type="Gene3D" id="1.20.1070.10">
    <property type="entry name" value="Rhodopsin 7-helix transmembrane proteins"/>
    <property type="match status" value="1"/>
</dbReference>
<dbReference type="InterPro" id="IPR050119">
    <property type="entry name" value="CCR1-9-like"/>
</dbReference>
<dbReference type="InterPro" id="IPR002236">
    <property type="entry name" value="Chemokine_CCR1"/>
</dbReference>
<dbReference type="InterPro" id="IPR000355">
    <property type="entry name" value="Chemokine_rcpt"/>
</dbReference>
<dbReference type="InterPro" id="IPR000276">
    <property type="entry name" value="GPCR_Rhodpsn"/>
</dbReference>
<dbReference type="InterPro" id="IPR017452">
    <property type="entry name" value="GPCR_Rhodpsn_7TM"/>
</dbReference>
<dbReference type="PANTHER" id="PTHR10489:SF711">
    <property type="entry name" value="C-C CHEMOKINE RECEPTOR TYPE 1"/>
    <property type="match status" value="1"/>
</dbReference>
<dbReference type="PANTHER" id="PTHR10489">
    <property type="entry name" value="CELL ADHESION MOLECULE"/>
    <property type="match status" value="1"/>
</dbReference>
<dbReference type="Pfam" id="PF00001">
    <property type="entry name" value="7tm_1"/>
    <property type="match status" value="1"/>
</dbReference>
<dbReference type="PRINTS" id="PR00657">
    <property type="entry name" value="CCCHEMOKINER"/>
</dbReference>
<dbReference type="PRINTS" id="PR01106">
    <property type="entry name" value="CHEMOKINER1"/>
</dbReference>
<dbReference type="PRINTS" id="PR00237">
    <property type="entry name" value="GPCRRHODOPSN"/>
</dbReference>
<dbReference type="SMART" id="SM01381">
    <property type="entry name" value="7TM_GPCR_Srsx"/>
    <property type="match status" value="1"/>
</dbReference>
<dbReference type="SUPFAM" id="SSF81321">
    <property type="entry name" value="Family A G protein-coupled receptor-like"/>
    <property type="match status" value="1"/>
</dbReference>
<dbReference type="PROSITE" id="PS00237">
    <property type="entry name" value="G_PROTEIN_RECEP_F1_1"/>
    <property type="match status" value="1"/>
</dbReference>
<dbReference type="PROSITE" id="PS50262">
    <property type="entry name" value="G_PROTEIN_RECEP_F1_2"/>
    <property type="match status" value="1"/>
</dbReference>
<gene>
    <name type="primary">CCR1</name>
    <name type="synonym">CMKBR1</name>
    <name type="synonym">CMKR1</name>
    <name type="synonym">SCYAR1</name>
</gene>
<proteinExistence type="evidence at protein level"/>
<feature type="chain" id="PRO_0000069228" description="C-C chemokine receptor type 1">
    <location>
        <begin position="1"/>
        <end position="355"/>
    </location>
</feature>
<feature type="topological domain" description="Extracellular" evidence="2">
    <location>
        <begin position="1"/>
        <end position="34"/>
    </location>
</feature>
<feature type="transmembrane region" description="Helical; Name=1" evidence="2">
    <location>
        <begin position="35"/>
        <end position="60"/>
    </location>
</feature>
<feature type="topological domain" description="Cytoplasmic" evidence="2">
    <location>
        <begin position="61"/>
        <end position="64"/>
    </location>
</feature>
<feature type="transmembrane region" description="Helical; Name=2" evidence="2">
    <location>
        <begin position="65"/>
        <end position="91"/>
    </location>
</feature>
<feature type="topological domain" description="Extracellular" evidence="2">
    <location>
        <begin position="92"/>
        <end position="107"/>
    </location>
</feature>
<feature type="transmembrane region" description="Helical; Name=3" evidence="2">
    <location>
        <begin position="108"/>
        <end position="129"/>
    </location>
</feature>
<feature type="topological domain" description="Cytoplasmic" evidence="2">
    <location>
        <begin position="130"/>
        <end position="146"/>
    </location>
</feature>
<feature type="transmembrane region" description="Helical; Name=4" evidence="2">
    <location>
        <begin position="147"/>
        <end position="171"/>
    </location>
</feature>
<feature type="topological domain" description="Extracellular" evidence="2">
    <location>
        <begin position="172"/>
        <end position="197"/>
    </location>
</feature>
<feature type="transmembrane region" description="Helical; Name=5" evidence="2">
    <location>
        <begin position="198"/>
        <end position="223"/>
    </location>
</feature>
<feature type="topological domain" description="Cytoplasmic" evidence="2">
    <location>
        <begin position="224"/>
        <end position="239"/>
    </location>
</feature>
<feature type="transmembrane region" description="Helical; Name=6" evidence="2">
    <location>
        <begin position="240"/>
        <end position="264"/>
    </location>
</feature>
<feature type="topological domain" description="Extracellular" evidence="2">
    <location>
        <begin position="265"/>
        <end position="281"/>
    </location>
</feature>
<feature type="transmembrane region" description="Helical; Name=7" evidence="2">
    <location>
        <begin position="282"/>
        <end position="305"/>
    </location>
</feature>
<feature type="topological domain" description="Cytoplasmic" evidence="2">
    <location>
        <begin position="306"/>
        <end position="355"/>
    </location>
</feature>
<feature type="glycosylation site" description="N-linked (GlcNAc...) asparagine" evidence="2">
    <location>
        <position position="5"/>
    </location>
</feature>
<feature type="disulfide bond" evidence="9">
    <location>
        <begin position="24"/>
        <end position="273"/>
    </location>
</feature>
<feature type="disulfide bond" evidence="9">
    <location>
        <begin position="106"/>
        <end position="183"/>
    </location>
</feature>
<feature type="sequence conflict" description="In Ref. 3; BAA01723." evidence="10" ref="3">
    <original>E</original>
    <variation>D</variation>
    <location>
        <position position="337"/>
    </location>
</feature>
<feature type="helix" evidence="15">
    <location>
        <begin position="27"/>
        <end position="58"/>
    </location>
</feature>
<feature type="turn" evidence="15">
    <location>
        <begin position="59"/>
        <end position="61"/>
    </location>
</feature>
<feature type="strand" evidence="15">
    <location>
        <begin position="62"/>
        <end position="65"/>
    </location>
</feature>
<feature type="helix" evidence="15">
    <location>
        <begin position="68"/>
        <end position="96"/>
    </location>
</feature>
<feature type="helix" evidence="15">
    <location>
        <begin position="103"/>
        <end position="136"/>
    </location>
</feature>
<feature type="turn" evidence="15">
    <location>
        <begin position="137"/>
        <end position="139"/>
    </location>
</feature>
<feature type="helix" evidence="15">
    <location>
        <begin position="140"/>
        <end position="142"/>
    </location>
</feature>
<feature type="helix" evidence="15">
    <location>
        <begin position="147"/>
        <end position="164"/>
    </location>
</feature>
<feature type="helix" evidence="15">
    <location>
        <begin position="166"/>
        <end position="171"/>
    </location>
</feature>
<feature type="strand" evidence="15">
    <location>
        <begin position="173"/>
        <end position="177"/>
    </location>
</feature>
<feature type="strand" evidence="15">
    <location>
        <begin position="180"/>
        <end position="184"/>
    </location>
</feature>
<feature type="helix" evidence="14">
    <location>
        <begin position="189"/>
        <end position="191"/>
    </location>
</feature>
<feature type="helix" evidence="15">
    <location>
        <begin position="192"/>
        <end position="205"/>
    </location>
</feature>
<feature type="turn" evidence="15">
    <location>
        <begin position="206"/>
        <end position="208"/>
    </location>
</feature>
<feature type="helix" evidence="15">
    <location>
        <begin position="209"/>
        <end position="227"/>
    </location>
</feature>
<feature type="helix" evidence="15">
    <location>
        <begin position="232"/>
        <end position="263"/>
    </location>
</feature>
<feature type="helix" evidence="15">
    <location>
        <begin position="265"/>
        <end position="268"/>
    </location>
</feature>
<feature type="strand" evidence="14">
    <location>
        <begin position="269"/>
        <end position="271"/>
    </location>
</feature>
<feature type="turn" evidence="15">
    <location>
        <begin position="272"/>
        <end position="274"/>
    </location>
</feature>
<feature type="helix" evidence="15">
    <location>
        <begin position="275"/>
        <end position="301"/>
    </location>
</feature>
<feature type="turn" evidence="15">
    <location>
        <begin position="302"/>
        <end position="304"/>
    </location>
</feature>
<feature type="helix" evidence="15">
    <location>
        <begin position="306"/>
        <end position="317"/>
    </location>
</feature>
<name>CCR1_HUMAN</name>
<organism>
    <name type="scientific">Homo sapiens</name>
    <name type="common">Human</name>
    <dbReference type="NCBI Taxonomy" id="9606"/>
    <lineage>
        <taxon>Eukaryota</taxon>
        <taxon>Metazoa</taxon>
        <taxon>Chordata</taxon>
        <taxon>Craniata</taxon>
        <taxon>Vertebrata</taxon>
        <taxon>Euteleostomi</taxon>
        <taxon>Mammalia</taxon>
        <taxon>Eutheria</taxon>
        <taxon>Euarchontoglires</taxon>
        <taxon>Primates</taxon>
        <taxon>Haplorrhini</taxon>
        <taxon>Catarrhini</taxon>
        <taxon>Hominidae</taxon>
        <taxon>Homo</taxon>
    </lineage>
</organism>
<accession>P32246</accession>
<accession>Q86VA9</accession>
<reference key="1">
    <citation type="journal article" date="1993" name="Cell">
        <title>Molecular cloning, functional expression, and signaling characteristics of a C-C chemokine receptor.</title>
        <authorList>
            <person name="Neote K."/>
            <person name="Digregorio D."/>
            <person name="Mak J.Y."/>
            <person name="Horuk R."/>
            <person name="Schall T.J."/>
        </authorList>
    </citation>
    <scope>NUCLEOTIDE SEQUENCE [MRNA]</scope>
    <scope>TISSUE SPECIFICITY</scope>
</reference>
<reference key="2">
    <citation type="journal article" date="1993" name="J. Exp. Med.">
        <title>Structure and functional expression of the human macrophage inflammatory protein 1 alpha/RANTES receptor.</title>
        <authorList>
            <person name="Gao J.-L."/>
            <person name="Kuhns D."/>
            <person name="Tiffany H.L."/>
            <person name="McDermott D."/>
            <person name="Li X."/>
            <person name="Francke U."/>
            <person name="Murphy P.M."/>
        </authorList>
    </citation>
    <scope>NUCLEOTIDE SEQUENCE [MRNA]</scope>
</reference>
<reference key="3">
    <citation type="journal article" date="1993" name="Int. Immunol.">
        <title>Molecular cloning of cDNAs encoding a LD78 receptor and putative leukocyte chemotactic peptide receptors.</title>
        <authorList>
            <person name="Nomura H."/>
            <person name="Nielsen B.W."/>
            <person name="Matsushima K."/>
        </authorList>
    </citation>
    <scope>NUCLEOTIDE SEQUENCE [MRNA]</scope>
    <source>
        <tissue>Monocyte</tissue>
    </source>
</reference>
<reference key="4">
    <citation type="journal article" date="2004" name="Genome Res.">
        <title>The status, quality, and expansion of the NIH full-length cDNA project: the Mammalian Gene Collection (MGC).</title>
        <authorList>
            <consortium name="The MGC Project Team"/>
        </authorList>
    </citation>
    <scope>NUCLEOTIDE SEQUENCE [LARGE SCALE MRNA]</scope>
    <source>
        <tissue>Blood</tissue>
    </source>
</reference>
<reference key="5">
    <citation type="journal article" date="2004" name="FASEB J.">
        <title>Human LZIP binds to CCR1 and differentially affects the chemotactic activities of CCR1-dependent chemokines.</title>
        <authorList>
            <person name="Ko J."/>
            <person name="Jang S.W."/>
            <person name="Kim Y.S."/>
            <person name="Kim I.S."/>
            <person name="Sung H.J."/>
            <person name="Kim H.-H."/>
            <person name="Park J.Y."/>
            <person name="Lee Y.H."/>
            <person name="Kim J."/>
            <person name="Na D.S."/>
        </authorList>
    </citation>
    <scope>INTERACTION WITH CREB3</scope>
</reference>
<reference key="6">
    <citation type="journal article" date="2004" name="Eur. J. Immunol.">
        <title>Differential chemokine activation of CC chemokine receptor 1-regulated pathways: ligand selective activation of Galpha 14-coupled pathways.</title>
        <authorList>
            <person name="Tian Y."/>
            <person name="New D.C."/>
            <person name="Yung L.Y."/>
            <person name="Allen R.A."/>
            <person name="Slocombe P.M."/>
            <person name="Twomey B.M."/>
            <person name="Lee M.M.K."/>
            <person name="Wong Y.H."/>
        </authorList>
    </citation>
    <scope>FUNCTION</scope>
</reference>
<reference key="7">
    <citation type="journal article" date="2005" name="J. Immunol.">
        <title>Proteolytic activation of alternative CCR1 ligands in inflammation.</title>
        <authorList>
            <person name="Berahovich R.D."/>
            <person name="Miao Z."/>
            <person name="Wang Y."/>
            <person name="Premack B."/>
            <person name="Howard M.C."/>
            <person name="Schall T.J."/>
        </authorList>
    </citation>
    <scope>FUNCTION</scope>
    <scope>INTERACTION WITH CCL3; CCL15 AND CCL23</scope>
</reference>
<reference key="8">
    <citation type="journal article" date="2008" name="Exp. Mol. Med.">
        <title>Human LZIP induces monocyte CC chemokine receptor 2 expression leading to enhancement of monocyte chemoattractant protein 1/CCL2-induced cell migration.</title>
        <authorList>
            <person name="Sung H.J."/>
            <person name="Kim Y.S."/>
            <person name="Kang H."/>
            <person name="Ko J."/>
        </authorList>
    </citation>
    <scope>SUBCELLULAR LOCATION</scope>
    <scope>INDUCTION</scope>
</reference>
<reference key="9">
    <citation type="journal article" date="2018" name="Sci. Rep.">
        <title>CXCL4/Platelet Factor 4 is an agonist of CCR1 and drives human monocyte migration.</title>
        <authorList>
            <person name="Fox J.M."/>
            <person name="Kausar F."/>
            <person name="Day A."/>
            <person name="Osborne M."/>
            <person name="Hussain K."/>
            <person name="Mueller A."/>
            <person name="Lin J."/>
            <person name="Tsuchiya T."/>
            <person name="Kanegasaki S."/>
            <person name="Pease J.E."/>
        </authorList>
    </citation>
    <scope>FUNCTION</scope>
    <scope>INTERACTION WITH PF4/CXCL4</scope>
</reference>
<reference evidence="11 12 13" key="10">
    <citation type="journal article" date="2022" name="Nat. Chem. Biol.">
        <title>Identification and mechanism of G protein-biased ligands for chemokine receptor CCR1.</title>
        <authorList>
            <person name="Shao Z."/>
            <person name="Shen Q."/>
            <person name="Yao B."/>
            <person name="Mao C."/>
            <person name="Chen L.N."/>
            <person name="Zhang H."/>
            <person name="Shen D.D."/>
            <person name="Zhang C."/>
            <person name="Li W."/>
            <person name="Du X."/>
            <person name="Li F."/>
            <person name="Ma H."/>
            <person name="Chen Z.H."/>
            <person name="Xu H.E."/>
            <person name="Ying S."/>
            <person name="Zhang Y."/>
            <person name="Shen H."/>
        </authorList>
    </citation>
    <scope>STRUCTURE BY ELECTRON MICROSCOPY (2.60 ANGSTROMS)</scope>
    <scope>DISULFIDE BONDS</scope>
    <scope>INTERACTION WITH GNAI1 AND CCL15</scope>
</reference>
<keyword id="KW-0002">3D-structure</keyword>
<keyword id="KW-1003">Cell membrane</keyword>
<keyword id="KW-1015">Disulfide bond</keyword>
<keyword id="KW-0297">G-protein coupled receptor</keyword>
<keyword id="KW-0325">Glycoprotein</keyword>
<keyword id="KW-0472">Membrane</keyword>
<keyword id="KW-1267">Proteomics identification</keyword>
<keyword id="KW-0675">Receptor</keyword>
<keyword id="KW-1185">Reference proteome</keyword>
<keyword id="KW-0807">Transducer</keyword>
<keyword id="KW-0812">Transmembrane</keyword>
<keyword id="KW-1133">Transmembrane helix</keyword>
<comment type="function">
    <text evidence="1 4 6 8">Chemokine receptor that plays a crucial role in regulating immune cell migration, inflammation, and immune responses (PubMed:14991608). Contributes to the inflammatory response by recruiting immune cells, such as monocytes, macrophages, T-cells, and dendritic cells, to sites of inflammation for the clearance of pathogens and the resolution of tissue damage. When activated by its ligands including CCL3, CCL5-9, CCL13-16 and CCL23, triggers a signaling cascade within immune cells, leading to their migration towards the source of the chemokine (PubMed:15905581). For example, mediates neutrophil migration after activation by CCL3 leading to the sequential release of TNF-alpha and leukotriene B4 (By similarity). Also mediates monocyte migration upon CXCL4 binding (PubMed:29930254). Activation by CCL5 results in neuroinflammation through the ERK1/2 signaling pathway (By similarity).</text>
</comment>
<comment type="subunit">
    <text evidence="5 6 8 9">Interacts with CREB3 (PubMed:15001559). Interacts with CCL3 (PubMed:15905581). Interacts with CCL15 (PubMed:15905581, PubMed:34949837). Interacts with CCL23 (PubMed:15905581). Interacts with GNAI1 (PubMed:34949837). Interacts with PF4/CXCL4 (PubMed:29930254).</text>
</comment>
<comment type="interaction">
    <interactant intactId="EBI-608322">
        <id>P32246</id>
    </interactant>
    <interactant intactId="EBI-2848366">
        <id>P13501</id>
        <label>CCL5</label>
    </interactant>
    <organismsDiffer>false</organismsDiffer>
    <experiments>2</experiments>
</comment>
<comment type="interaction">
    <interactant intactId="EBI-608322">
        <id>P32246</id>
    </interactant>
    <interactant intactId="EBI-625022">
        <id>O43889-2</id>
        <label>CREB3</label>
    </interactant>
    <organismsDiffer>false</organismsDiffer>
    <experiments>7</experiments>
</comment>
<comment type="interaction">
    <interactant intactId="EBI-608322">
        <id>P32246</id>
    </interactant>
    <interactant intactId="EBI-608347">
        <id>Q04941</id>
        <label>PLP2</label>
    </interactant>
    <organismsDiffer>false</organismsDiffer>
    <experiments>4</experiments>
</comment>
<comment type="interaction">
    <interactant intactId="EBI-608322">
        <id>P32246</id>
    </interactant>
    <interactant intactId="EBI-1051115">
        <id>Q9H3N1</id>
        <label>TMX1</label>
    </interactant>
    <organismsDiffer>false</organismsDiffer>
    <experiments>3</experiments>
</comment>
<comment type="subcellular location">
    <subcellularLocation>
        <location evidence="7">Cell membrane</location>
        <topology evidence="7">Multi-pass membrane protein</topology>
    </subcellularLocation>
</comment>
<comment type="tissue specificity">
    <text>Widely expressed in different hematopoietic cells.</text>
</comment>
<comment type="induction">
    <text evidence="7">Up-regulated by CREB3.</text>
</comment>
<comment type="similarity">
    <text evidence="3">Belongs to the G-protein coupled receptor 1 family.</text>
</comment>
<comment type="online information" name="Wikipedia">
    <link uri="https://en.wikipedia.org/wiki/CC_chemokine_receptors"/>
    <text>CC chemokine receptors entry</text>
</comment>
<comment type="online information" name="Atlas of Genetics and Cytogenetics in Oncology and Haematology">
    <link uri="https://atlasgeneticsoncology.org/gene/44379/CCR1"/>
</comment>
<evidence type="ECO:0000250" key="1">
    <source>
        <dbReference type="UniProtKB" id="P51675"/>
    </source>
</evidence>
<evidence type="ECO:0000255" key="2"/>
<evidence type="ECO:0000255" key="3">
    <source>
        <dbReference type="PROSITE-ProRule" id="PRU00521"/>
    </source>
</evidence>
<evidence type="ECO:0000269" key="4">
    <source>
    </source>
</evidence>
<evidence type="ECO:0000269" key="5">
    <source>
    </source>
</evidence>
<evidence type="ECO:0000269" key="6">
    <source>
    </source>
</evidence>
<evidence type="ECO:0000269" key="7">
    <source>
    </source>
</evidence>
<evidence type="ECO:0000269" key="8">
    <source>
    </source>
</evidence>
<evidence type="ECO:0000269" key="9">
    <source>
    </source>
</evidence>
<evidence type="ECO:0000305" key="10"/>
<evidence type="ECO:0007744" key="11">
    <source>
        <dbReference type="PDB" id="7VL8"/>
    </source>
</evidence>
<evidence type="ECO:0007744" key="12">
    <source>
        <dbReference type="PDB" id="7VL9"/>
    </source>
</evidence>
<evidence type="ECO:0007744" key="13">
    <source>
        <dbReference type="PDB" id="7VLA"/>
    </source>
</evidence>
<evidence type="ECO:0007829" key="14">
    <source>
        <dbReference type="PDB" id="7VL8"/>
    </source>
</evidence>
<evidence type="ECO:0007829" key="15">
    <source>
        <dbReference type="PDB" id="7VL9"/>
    </source>
</evidence>
<sequence>METPNTTEDYDTTTEFDYGDATPCQKVNERAFGAQLLPPLYSLVFVIGLVGNILVVLVLVQYKRLKNMTSIYLLNLAISDLLFLFTLPFWIDYKLKDDWVFGDAMCKILSGFYYTGLYSEIFFIILLTIDRYLAIVHAVFALRARTVTFGVITSIIIWALAILASMPGLYFSKTQWEFTHHTCSLHFPHESLREWKLFQALKLNLFGLVLPLLVMIICYTGIIKILLRRPNEKKSKAVRLIFVIMIIFFLFWTPYNLTILISVFQDFLFTHECEQSRHLDLAVQVTEVIAYTHCCVNPVIYAFVGERFRKYLRQLFHRRVAVHLVKWLPFLSVDRLERVSSTSPSTGEHELSAGF</sequence>